<accession>Q9HUM5</accession>
<reference key="1">
    <citation type="journal article" date="2000" name="Nature">
        <title>Complete genome sequence of Pseudomonas aeruginosa PAO1, an opportunistic pathogen.</title>
        <authorList>
            <person name="Stover C.K."/>
            <person name="Pham X.-Q.T."/>
            <person name="Erwin A.L."/>
            <person name="Mizoguchi S.D."/>
            <person name="Warrener P."/>
            <person name="Hickey M.J."/>
            <person name="Brinkman F.S.L."/>
            <person name="Hufnagle W.O."/>
            <person name="Kowalik D.J."/>
            <person name="Lagrou M."/>
            <person name="Garber R.L."/>
            <person name="Goltry L."/>
            <person name="Tolentino E."/>
            <person name="Westbrock-Wadman S."/>
            <person name="Yuan Y."/>
            <person name="Brody L.L."/>
            <person name="Coulter S.N."/>
            <person name="Folger K.R."/>
            <person name="Kas A."/>
            <person name="Larbig K."/>
            <person name="Lim R.M."/>
            <person name="Smith K.A."/>
            <person name="Spencer D.H."/>
            <person name="Wong G.K.-S."/>
            <person name="Wu Z."/>
            <person name="Paulsen I.T."/>
            <person name="Reizer J."/>
            <person name="Saier M.H. Jr."/>
            <person name="Hancock R.E.W."/>
            <person name="Lory S."/>
            <person name="Olson M.V."/>
        </authorList>
    </citation>
    <scope>NUCLEOTIDE SEQUENCE [LARGE SCALE GENOMIC DNA]</scope>
    <source>
        <strain>ATCC 15692 / DSM 22644 / CIP 104116 / JCM 14847 / LMG 12228 / 1C / PRS 101 / PAO1</strain>
    </source>
</reference>
<comment type="function">
    <text evidence="1">Required for the first step of histidine biosynthesis. May allow the feedback regulation of ATP phosphoribosyltransferase activity by histidine (By similarity).</text>
</comment>
<comment type="pathway">
    <text>Amino-acid biosynthesis; L-histidine biosynthesis; L-histidine from 5-phospho-alpha-D-ribose 1-diphosphate: step 1/9.</text>
</comment>
<comment type="subunit">
    <text evidence="1">Heteromultimer composed of HisG and HisZ subunits.</text>
</comment>
<comment type="subcellular location">
    <subcellularLocation>
        <location evidence="1">Cytoplasm</location>
    </subcellularLocation>
</comment>
<comment type="miscellaneous">
    <text>This function is generally fulfilled by the C-terminal part of HisG, which is missing in some bacteria such as this one.</text>
</comment>
<comment type="similarity">
    <text evidence="2">Belongs to the class-II aminoacyl-tRNA synthetase family. HisZ subfamily.</text>
</comment>
<proteinExistence type="inferred from homology"/>
<keyword id="KW-0028">Amino-acid biosynthesis</keyword>
<keyword id="KW-0963">Cytoplasm</keyword>
<keyword id="KW-0368">Histidine biosynthesis</keyword>
<keyword id="KW-1185">Reference proteome</keyword>
<gene>
    <name type="primary">hisZ</name>
    <name type="ordered locus">PA4939</name>
</gene>
<name>HISZ_PSEAE</name>
<feature type="chain" id="PRO_0000171052" description="ATP phosphoribosyltransferase regulatory subunit">
    <location>
        <begin position="1"/>
        <end position="394"/>
    </location>
</feature>
<organism>
    <name type="scientific">Pseudomonas aeruginosa (strain ATCC 15692 / DSM 22644 / CIP 104116 / JCM 14847 / LMG 12228 / 1C / PRS 101 / PAO1)</name>
    <dbReference type="NCBI Taxonomy" id="208964"/>
    <lineage>
        <taxon>Bacteria</taxon>
        <taxon>Pseudomonadati</taxon>
        <taxon>Pseudomonadota</taxon>
        <taxon>Gammaproteobacteria</taxon>
        <taxon>Pseudomonadales</taxon>
        <taxon>Pseudomonadaceae</taxon>
        <taxon>Pseudomonas</taxon>
    </lineage>
</organism>
<protein>
    <recommendedName>
        <fullName>ATP phosphoribosyltransferase regulatory subunit</fullName>
    </recommendedName>
</protein>
<sequence length="394" mass="42546">MATVDRWLLPDGIEEVLPPEAARIEAARRQVLDLFHRWGYEFVVTPHIEYLESLLTGAGQDLDLRTFKVTDPASGRLMGFRADITPQVARMDAHSLRREGPSRLCYAGSVLHAQPRALSTSRSPIQLGAELYGDPSPASDVEVISLMLEMLEMAEVPDVHMDLGHVGIYRGLARAAGLSGEVEQQLFDALQRKAVDEVEALTADLPAELRGMLRALAELCGGRDALEQGRARLAAAPADVQVALNELIEIADSLAGRFPGLPLYFDLGELRGYHYHTGVVFAAFVPGVGQSIAQGGRYDDIGADFGRARPATGFSTDLKSLVTLGQARLDQAVSGIWAPAEGAGLWQAVQRLRRDGQRVVQALPGQDAASAREAGCDRQLALRDGNWQVAPLAS</sequence>
<dbReference type="EMBL" id="AE004091">
    <property type="protein sequence ID" value="AAG08324.1"/>
    <property type="molecule type" value="Genomic_DNA"/>
</dbReference>
<dbReference type="PIR" id="G83027">
    <property type="entry name" value="G83027"/>
</dbReference>
<dbReference type="RefSeq" id="NP_253626.1">
    <property type="nucleotide sequence ID" value="NC_002516.2"/>
</dbReference>
<dbReference type="RefSeq" id="WP_003095644.1">
    <property type="nucleotide sequence ID" value="NZ_QZGE01000002.1"/>
</dbReference>
<dbReference type="SMR" id="Q9HUM5"/>
<dbReference type="STRING" id="208964.PA4939"/>
<dbReference type="PaxDb" id="208964-PA4939"/>
<dbReference type="GeneID" id="877658"/>
<dbReference type="KEGG" id="pae:PA4939"/>
<dbReference type="PATRIC" id="fig|208964.12.peg.5172"/>
<dbReference type="PseudoCAP" id="PA4939"/>
<dbReference type="HOGENOM" id="CLU_025113_0_1_6"/>
<dbReference type="InParanoid" id="Q9HUM5"/>
<dbReference type="OrthoDB" id="9769617at2"/>
<dbReference type="PhylomeDB" id="Q9HUM5"/>
<dbReference type="BioCyc" id="PAER208964:G1FZ6-5055-MONOMER"/>
<dbReference type="UniPathway" id="UPA00031">
    <property type="reaction ID" value="UER00006"/>
</dbReference>
<dbReference type="Proteomes" id="UP000002438">
    <property type="component" value="Chromosome"/>
</dbReference>
<dbReference type="GO" id="GO:0005737">
    <property type="term" value="C:cytoplasm"/>
    <property type="evidence" value="ECO:0007669"/>
    <property type="project" value="UniProtKB-SubCell"/>
</dbReference>
<dbReference type="GO" id="GO:0000105">
    <property type="term" value="P:L-histidine biosynthetic process"/>
    <property type="evidence" value="ECO:0007669"/>
    <property type="project" value="UniProtKB-UniRule"/>
</dbReference>
<dbReference type="CDD" id="cd00773">
    <property type="entry name" value="HisRS-like_core"/>
    <property type="match status" value="1"/>
</dbReference>
<dbReference type="FunFam" id="3.30.930.10:FF:000161">
    <property type="entry name" value="ATP phosphoribosyltransferase regulatory subunit"/>
    <property type="match status" value="1"/>
</dbReference>
<dbReference type="Gene3D" id="3.30.930.10">
    <property type="entry name" value="Bira Bifunctional Protein, Domain 2"/>
    <property type="match status" value="1"/>
</dbReference>
<dbReference type="HAMAP" id="MF_00125">
    <property type="entry name" value="HisZ"/>
    <property type="match status" value="1"/>
</dbReference>
<dbReference type="InterPro" id="IPR045864">
    <property type="entry name" value="aa-tRNA-synth_II/BPL/LPL"/>
</dbReference>
<dbReference type="InterPro" id="IPR041715">
    <property type="entry name" value="HisRS-like_core"/>
</dbReference>
<dbReference type="InterPro" id="IPR004516">
    <property type="entry name" value="HisRS/HisZ"/>
</dbReference>
<dbReference type="InterPro" id="IPR004517">
    <property type="entry name" value="HisZ"/>
</dbReference>
<dbReference type="NCBIfam" id="TIGR00443">
    <property type="entry name" value="hisZ_biosyn_reg"/>
    <property type="match status" value="1"/>
</dbReference>
<dbReference type="NCBIfam" id="NF008935">
    <property type="entry name" value="PRK12292.1-1"/>
    <property type="match status" value="1"/>
</dbReference>
<dbReference type="NCBIfam" id="NF008937">
    <property type="entry name" value="PRK12292.1-4"/>
    <property type="match status" value="1"/>
</dbReference>
<dbReference type="NCBIfam" id="NF009086">
    <property type="entry name" value="PRK12421.1"/>
    <property type="match status" value="1"/>
</dbReference>
<dbReference type="PANTHER" id="PTHR11476:SF7">
    <property type="entry name" value="HISTIDINE--TRNA LIGASE"/>
    <property type="match status" value="1"/>
</dbReference>
<dbReference type="PANTHER" id="PTHR11476">
    <property type="entry name" value="HISTIDYL-TRNA SYNTHETASE"/>
    <property type="match status" value="1"/>
</dbReference>
<dbReference type="Pfam" id="PF13393">
    <property type="entry name" value="tRNA-synt_His"/>
    <property type="match status" value="1"/>
</dbReference>
<dbReference type="PIRSF" id="PIRSF001549">
    <property type="entry name" value="His-tRNA_synth"/>
    <property type="match status" value="1"/>
</dbReference>
<dbReference type="SUPFAM" id="SSF55681">
    <property type="entry name" value="Class II aaRS and biotin synthetases"/>
    <property type="match status" value="1"/>
</dbReference>
<evidence type="ECO:0000250" key="1"/>
<evidence type="ECO:0000305" key="2"/>